<organism>
    <name type="scientific">Sulfolobus spindle-shape virus 1</name>
    <name type="common">SSV1</name>
    <dbReference type="NCBI Taxonomy" id="244589"/>
    <lineage>
        <taxon>Viruses</taxon>
        <taxon>Viruses incertae sedis</taxon>
        <taxon>Fuselloviridae</taxon>
        <taxon>Alphafusellovirus</taxon>
    </lineage>
</organism>
<gene>
    <name type="ORF">e51</name>
</gene>
<sequence>MIEKRKDRIVKRLNISISEETYETLQRLKAKTGKTMGQLIEEAVKLLEAEE</sequence>
<keyword id="KW-1185">Reference proteome</keyword>
<protein>
    <recommendedName>
        <fullName>Uncharacterized protein E-51</fullName>
    </recommendedName>
</protein>
<dbReference type="EMBL" id="X07234">
    <property type="protein sequence ID" value="CAA30217.1"/>
    <property type="molecule type" value="Genomic_DNA"/>
</dbReference>
<dbReference type="PIR" id="S03218">
    <property type="entry name" value="S03218"/>
</dbReference>
<dbReference type="RefSeq" id="NP_039784.1">
    <property type="nucleotide sequence ID" value="NC_001338.1"/>
</dbReference>
<dbReference type="SMR" id="P20217"/>
<dbReference type="KEGG" id="vg:2559638"/>
<dbReference type="Proteomes" id="UP000000854">
    <property type="component" value="Genome"/>
</dbReference>
<dbReference type="GO" id="GO:0006355">
    <property type="term" value="P:regulation of DNA-templated transcription"/>
    <property type="evidence" value="ECO:0007669"/>
    <property type="project" value="InterPro"/>
</dbReference>
<dbReference type="InterPro" id="IPR002145">
    <property type="entry name" value="CopG"/>
</dbReference>
<dbReference type="Pfam" id="PF01402">
    <property type="entry name" value="RHH_1"/>
    <property type="match status" value="1"/>
</dbReference>
<evidence type="ECO:0000269" key="1">
    <source>
    </source>
</evidence>
<reference key="1">
    <citation type="journal article" date="1991" name="Virology">
        <title>Complete nucleotide sequence of the virus SSV1 of the archaebacterium Sulfolobus shibatae.</title>
        <authorList>
            <person name="Palm P."/>
            <person name="Schleper C."/>
            <person name="Grampp B."/>
            <person name="Yeats S."/>
            <person name="McWilliam P."/>
            <person name="Reiter W.-D."/>
            <person name="Zillig W."/>
        </authorList>
    </citation>
    <scope>NUCLEOTIDE SEQUENCE [GENOMIC DNA]</scope>
</reference>
<reference key="2">
    <citation type="journal article" date="1999" name="Genetics">
        <title>Genetic requirements for the function of the archaeal virus SSV1 in Sulfolobus solfataricus: construction and testing of viral shuttle vectors.</title>
        <authorList>
            <person name="Stedman K.M."/>
            <person name="Schleper C."/>
            <person name="Rumpf E."/>
            <person name="Zillig W."/>
        </authorList>
    </citation>
    <scope>FUNCTION</scope>
</reference>
<name>E51_SSV1</name>
<proteinExistence type="predicted"/>
<feature type="chain" id="PRO_0000223029" description="Uncharacterized protein E-51">
    <location>
        <begin position="1"/>
        <end position="51"/>
    </location>
</feature>
<comment type="function">
    <text evidence="1">This protein is non-essential for virus function.</text>
</comment>
<accession>P20217</accession>
<organismHost>
    <name type="scientific">Saccharolobus solfataricus</name>
    <name type="common">Sulfolobus solfataricus</name>
    <dbReference type="NCBI Taxonomy" id="2287"/>
</organismHost>